<comment type="function">
    <text evidence="1">Cytoplasmic polyadenylation element binding protein that binds to and regulates the translation of specific mRNAs.</text>
</comment>
<proteinExistence type="evidence at transcript level"/>
<evidence type="ECO:0000250" key="1"/>
<evidence type="ECO:0000256" key="2">
    <source>
        <dbReference type="SAM" id="MobiDB-lite"/>
    </source>
</evidence>
<name>CPB3_CAEJA</name>
<gene>
    <name type="primary">cpb-3</name>
</gene>
<dbReference type="EMBL" id="AY589640">
    <property type="protein sequence ID" value="AAT72446.1"/>
    <property type="molecule type" value="Genomic_DNA"/>
</dbReference>
<dbReference type="EMBL" id="AY589639">
    <property type="protein sequence ID" value="AAT72446.1"/>
    <property type="status" value="JOINED"/>
    <property type="molecule type" value="Genomic_DNA"/>
</dbReference>
<dbReference type="EMBL" id="AY589609">
    <property type="protein sequence ID" value="AAT72417.1"/>
    <property type="molecule type" value="mRNA"/>
</dbReference>
<dbReference type="SMR" id="Q6E3D2"/>
<dbReference type="FunCoup" id="Q6E3D2">
    <property type="interactions" value="4"/>
</dbReference>
<dbReference type="STRING" id="281687.Q6E3D2"/>
<dbReference type="eggNOG" id="KOG0129">
    <property type="taxonomic scope" value="Eukaryota"/>
</dbReference>
<dbReference type="HOGENOM" id="CLU_377774_0_0_1"/>
<dbReference type="InParanoid" id="Q6E3D2"/>
<dbReference type="Proteomes" id="UP000005237">
    <property type="component" value="Unassembled WGS sequence"/>
</dbReference>
<dbReference type="GO" id="GO:0005737">
    <property type="term" value="C:cytoplasm"/>
    <property type="evidence" value="ECO:0007669"/>
    <property type="project" value="TreeGrafter"/>
</dbReference>
<dbReference type="GO" id="GO:0043005">
    <property type="term" value="C:neuron projection"/>
    <property type="evidence" value="ECO:0007669"/>
    <property type="project" value="TreeGrafter"/>
</dbReference>
<dbReference type="GO" id="GO:0005634">
    <property type="term" value="C:nucleus"/>
    <property type="evidence" value="ECO:0007669"/>
    <property type="project" value="TreeGrafter"/>
</dbReference>
<dbReference type="GO" id="GO:0045202">
    <property type="term" value="C:synapse"/>
    <property type="evidence" value="ECO:0007669"/>
    <property type="project" value="TreeGrafter"/>
</dbReference>
<dbReference type="GO" id="GO:0003730">
    <property type="term" value="F:mRNA 3'-UTR binding"/>
    <property type="evidence" value="ECO:0007669"/>
    <property type="project" value="InterPro"/>
</dbReference>
<dbReference type="GO" id="GO:0000900">
    <property type="term" value="F:mRNA regulatory element binding translation repressor activity"/>
    <property type="evidence" value="ECO:0007669"/>
    <property type="project" value="TreeGrafter"/>
</dbReference>
<dbReference type="GO" id="GO:0043022">
    <property type="term" value="F:ribosome binding"/>
    <property type="evidence" value="ECO:0007669"/>
    <property type="project" value="TreeGrafter"/>
</dbReference>
<dbReference type="GO" id="GO:0008135">
    <property type="term" value="F:translation factor activity, RNA binding"/>
    <property type="evidence" value="ECO:0007669"/>
    <property type="project" value="TreeGrafter"/>
</dbReference>
<dbReference type="GO" id="GO:2000766">
    <property type="term" value="P:negative regulation of cytoplasmic translation"/>
    <property type="evidence" value="ECO:0007669"/>
    <property type="project" value="TreeGrafter"/>
</dbReference>
<dbReference type="CDD" id="cd19757">
    <property type="entry name" value="Bbox1"/>
    <property type="match status" value="1"/>
</dbReference>
<dbReference type="CDD" id="cd12723">
    <property type="entry name" value="RRM1_CPEB1"/>
    <property type="match status" value="1"/>
</dbReference>
<dbReference type="CDD" id="cd12725">
    <property type="entry name" value="RRM2_CPEB1"/>
    <property type="match status" value="1"/>
</dbReference>
<dbReference type="FunFam" id="3.30.70.330:FF:000483">
    <property type="entry name" value="Cytoplasmic polyadenylation element-binding protein 2"/>
    <property type="match status" value="1"/>
</dbReference>
<dbReference type="FunFam" id="3.30.70.330:FF:000677">
    <property type="entry name" value="Cytoplasmic polyadenylation element-binding protein 3"/>
    <property type="match status" value="1"/>
</dbReference>
<dbReference type="Gene3D" id="3.30.70.330">
    <property type="match status" value="2"/>
</dbReference>
<dbReference type="Gene3D" id="4.10.640.40">
    <property type="entry name" value="Cytoplasmic polyadenylation element-binding protein, ZZ domain"/>
    <property type="match status" value="1"/>
</dbReference>
<dbReference type="InterPro" id="IPR032296">
    <property type="entry name" value="CEBP_ZZ"/>
</dbReference>
<dbReference type="InterPro" id="IPR038446">
    <property type="entry name" value="CEBP_ZZ_sf"/>
</dbReference>
<dbReference type="InterPro" id="IPR034819">
    <property type="entry name" value="CPEB"/>
</dbReference>
<dbReference type="InterPro" id="IPR034977">
    <property type="entry name" value="CPEB1_RRM1"/>
</dbReference>
<dbReference type="InterPro" id="IPR012677">
    <property type="entry name" value="Nucleotide-bd_a/b_plait_sf"/>
</dbReference>
<dbReference type="InterPro" id="IPR035979">
    <property type="entry name" value="RBD_domain_sf"/>
</dbReference>
<dbReference type="InterPro" id="IPR000504">
    <property type="entry name" value="RRM_dom"/>
</dbReference>
<dbReference type="PANTHER" id="PTHR12566">
    <property type="entry name" value="CYTOPLASMIC POLYADENYLATION ELEMENT BINDING PROTEIN CPEB"/>
    <property type="match status" value="1"/>
</dbReference>
<dbReference type="PANTHER" id="PTHR12566:SF9">
    <property type="entry name" value="CYTOPLASMIC POLYADENYLATION ELEMENT-BINDING PROTEIN 1"/>
    <property type="match status" value="1"/>
</dbReference>
<dbReference type="Pfam" id="PF16366">
    <property type="entry name" value="CEBP_ZZ"/>
    <property type="match status" value="1"/>
</dbReference>
<dbReference type="Pfam" id="PF16367">
    <property type="entry name" value="RRM_7"/>
    <property type="match status" value="1"/>
</dbReference>
<dbReference type="SUPFAM" id="SSF54928">
    <property type="entry name" value="RNA-binding domain, RBD"/>
    <property type="match status" value="1"/>
</dbReference>
<protein>
    <recommendedName>
        <fullName>Cytoplasmic polyadenylation element-binding protein 3</fullName>
    </recommendedName>
</protein>
<sequence>MDRNDDSAPVQAAAEPAEHPGDEKSGKRNVPPALKLVENVVATGEKSPAPASVYDLFKKYHKGEKNGEENVNVNVGFDQLSSDEKSGFLRKLQMLTVGSKKKDGESSQSPAGRLLKKFVPSRRTTPTASASTAKTTSPSRFSVFGRSAKKVSESFSSQKPIHRKQSARRLQFTEKENPQPDAARNKVVAAMTREYEKLSKECAPVPINNKPARVQMQIPRGSLETPTDSPVKSFSSTTTSSSPEKEREKEKEKIEQPRYGTTQRQSVNSQQSSASWHGELPPRDYTSPTFSRKIFVGGVPWDITEAALKDSFGEFGSCAVEWPGQEARYRSGQSNVMPPNANLRAHSKYSGQATTGYVYMIFEDERAVAALLHECSQEIGGAGEWYFKIRAQRSKSTEIRQVQIIPWVTSDSLYCHEESILEVGIEPKRTVFVGALHGMMTAQVLHSIMEDCFGCVECVQLDTDKFKYPIGSGRVTFREHGAYFKAIEIGYLHVHTSKFRKRVQIDPFLESTSCMVCNLEPAHCFCRNRNCFKYYCHSCWSIDHGKDTVVDVHVPVIVPSSATKAYQGHASRHSHLSSNSPSKARDGQNSNNSQFSQLLSPAFPMIVGAPTPTLSALYGYIQNNHTMSPTVYDGPLTPPSSETMSKRGSREFSSNSNGGPVFISPAPVLSSQKLETPIPSYFANSTAILTPTSTYYGSPSTQQTYYAPNVYYGYMPQPIPYDGYVCPPPANYTQ</sequence>
<feature type="chain" id="PRO_0000081518" description="Cytoplasmic polyadenylation element-binding protein 3">
    <location>
        <begin position="1"/>
        <end position="734"/>
    </location>
</feature>
<feature type="domain" description="RRM">
    <location>
        <begin position="294"/>
        <end position="316"/>
    </location>
</feature>
<feature type="region of interest" description="Disordered" evidence="2">
    <location>
        <begin position="1"/>
        <end position="31"/>
    </location>
</feature>
<feature type="region of interest" description="Disordered" evidence="2">
    <location>
        <begin position="98"/>
        <end position="185"/>
    </location>
</feature>
<feature type="region of interest" description="Disordered" evidence="2">
    <location>
        <begin position="220"/>
        <end position="283"/>
    </location>
</feature>
<feature type="region of interest" description="Disordered" evidence="2">
    <location>
        <begin position="564"/>
        <end position="593"/>
    </location>
</feature>
<feature type="region of interest" description="Disordered" evidence="2">
    <location>
        <begin position="630"/>
        <end position="657"/>
    </location>
</feature>
<feature type="compositionally biased region" description="Basic and acidic residues" evidence="2">
    <location>
        <begin position="16"/>
        <end position="26"/>
    </location>
</feature>
<feature type="compositionally biased region" description="Low complexity" evidence="2">
    <location>
        <begin position="121"/>
        <end position="140"/>
    </location>
</feature>
<feature type="compositionally biased region" description="Low complexity" evidence="2">
    <location>
        <begin position="232"/>
        <end position="242"/>
    </location>
</feature>
<feature type="compositionally biased region" description="Basic and acidic residues" evidence="2">
    <location>
        <begin position="243"/>
        <end position="256"/>
    </location>
</feature>
<feature type="compositionally biased region" description="Polar residues" evidence="2">
    <location>
        <begin position="259"/>
        <end position="275"/>
    </location>
</feature>
<feature type="compositionally biased region" description="Low complexity" evidence="2">
    <location>
        <begin position="576"/>
        <end position="593"/>
    </location>
</feature>
<accession>Q6E3D2</accession>
<reference key="1">
    <citation type="journal article" date="2004" name="Genome Res.">
        <title>A phylogeny of Caenorhabditis reveals frequent loss of introns during nematode evolution.</title>
        <authorList>
            <person name="Cho S."/>
            <person name="Jin S.W."/>
            <person name="Cohen A."/>
            <person name="Ellis R.E."/>
        </authorList>
    </citation>
    <scope>NUCLEOTIDE SEQUENCE [GENOMIC DNA / MRNA]</scope>
</reference>
<organism>
    <name type="scientific">Caenorhabditis japonica</name>
    <dbReference type="NCBI Taxonomy" id="281687"/>
    <lineage>
        <taxon>Eukaryota</taxon>
        <taxon>Metazoa</taxon>
        <taxon>Ecdysozoa</taxon>
        <taxon>Nematoda</taxon>
        <taxon>Chromadorea</taxon>
        <taxon>Rhabditida</taxon>
        <taxon>Rhabditina</taxon>
        <taxon>Rhabditomorpha</taxon>
        <taxon>Rhabditoidea</taxon>
        <taxon>Rhabditidae</taxon>
        <taxon>Peloderinae</taxon>
        <taxon>Caenorhabditis</taxon>
    </lineage>
</organism>
<keyword id="KW-1185">Reference proteome</keyword>
<keyword id="KW-0694">RNA-binding</keyword>